<protein>
    <recommendedName>
        <fullName evidence="1">Small ribosomal subunit protein bS16</fullName>
    </recommendedName>
    <alternativeName>
        <fullName evidence="2">30S ribosomal protein S16</fullName>
    </alternativeName>
</protein>
<keyword id="KW-1185">Reference proteome</keyword>
<keyword id="KW-0687">Ribonucleoprotein</keyword>
<keyword id="KW-0689">Ribosomal protein</keyword>
<name>RS16_RICPR</name>
<proteinExistence type="inferred from homology"/>
<gene>
    <name evidence="1" type="primary">rpsP</name>
    <name type="ordered locus">RP878</name>
</gene>
<reference key="1">
    <citation type="journal article" date="1998" name="Nature">
        <title>The genome sequence of Rickettsia prowazekii and the origin of mitochondria.</title>
        <authorList>
            <person name="Andersson S.G.E."/>
            <person name="Zomorodipour A."/>
            <person name="Andersson J.O."/>
            <person name="Sicheritz-Ponten T."/>
            <person name="Alsmark U.C.M."/>
            <person name="Podowski R.M."/>
            <person name="Naeslund A.K."/>
            <person name="Eriksson A.-S."/>
            <person name="Winkler H.H."/>
            <person name="Kurland C.G."/>
        </authorList>
    </citation>
    <scope>NUCLEOTIDE SEQUENCE [LARGE SCALE GENOMIC DNA]</scope>
    <source>
        <strain>Madrid E</strain>
    </source>
</reference>
<organism>
    <name type="scientific">Rickettsia prowazekii (strain Madrid E)</name>
    <dbReference type="NCBI Taxonomy" id="272947"/>
    <lineage>
        <taxon>Bacteria</taxon>
        <taxon>Pseudomonadati</taxon>
        <taxon>Pseudomonadota</taxon>
        <taxon>Alphaproteobacteria</taxon>
        <taxon>Rickettsiales</taxon>
        <taxon>Rickettsiaceae</taxon>
        <taxon>Rickettsieae</taxon>
        <taxon>Rickettsia</taxon>
        <taxon>typhus group</taxon>
    </lineage>
</organism>
<sequence length="111" mass="12545">MAVKIRLARGGAKKRPFYRVVIANATAPRDGDFLEKVGTYNPMLASDNSERVILKKDRIEYWLGTGAKPTERVAKFIEKAGVTLPKKVKKEMEVKAKNRKVRPSKKQSKES</sequence>
<dbReference type="EMBL" id="AJ235273">
    <property type="protein sequence ID" value="CAA15300.1"/>
    <property type="molecule type" value="Genomic_DNA"/>
</dbReference>
<dbReference type="PIR" id="D71650">
    <property type="entry name" value="D71650"/>
</dbReference>
<dbReference type="RefSeq" id="NP_221224.1">
    <property type="nucleotide sequence ID" value="NC_000963.1"/>
</dbReference>
<dbReference type="RefSeq" id="WP_004596731.1">
    <property type="nucleotide sequence ID" value="NC_000963.1"/>
</dbReference>
<dbReference type="SMR" id="Q9ZC90"/>
<dbReference type="STRING" id="272947.gene:17555947"/>
<dbReference type="EnsemblBacteria" id="CAA15300">
    <property type="protein sequence ID" value="CAA15300"/>
    <property type="gene ID" value="CAA15300"/>
</dbReference>
<dbReference type="GeneID" id="57570001"/>
<dbReference type="KEGG" id="rpr:RP878"/>
<dbReference type="PATRIC" id="fig|272947.5.peg.916"/>
<dbReference type="eggNOG" id="COG0228">
    <property type="taxonomic scope" value="Bacteria"/>
</dbReference>
<dbReference type="HOGENOM" id="CLU_100590_3_1_5"/>
<dbReference type="OrthoDB" id="9807878at2"/>
<dbReference type="Proteomes" id="UP000002480">
    <property type="component" value="Chromosome"/>
</dbReference>
<dbReference type="GO" id="GO:0005737">
    <property type="term" value="C:cytoplasm"/>
    <property type="evidence" value="ECO:0007669"/>
    <property type="project" value="UniProtKB-ARBA"/>
</dbReference>
<dbReference type="GO" id="GO:0015935">
    <property type="term" value="C:small ribosomal subunit"/>
    <property type="evidence" value="ECO:0007669"/>
    <property type="project" value="TreeGrafter"/>
</dbReference>
<dbReference type="GO" id="GO:0003735">
    <property type="term" value="F:structural constituent of ribosome"/>
    <property type="evidence" value="ECO:0007669"/>
    <property type="project" value="InterPro"/>
</dbReference>
<dbReference type="GO" id="GO:0006412">
    <property type="term" value="P:translation"/>
    <property type="evidence" value="ECO:0007669"/>
    <property type="project" value="UniProtKB-UniRule"/>
</dbReference>
<dbReference type="Gene3D" id="3.30.1320.10">
    <property type="match status" value="1"/>
</dbReference>
<dbReference type="HAMAP" id="MF_00385">
    <property type="entry name" value="Ribosomal_bS16"/>
    <property type="match status" value="1"/>
</dbReference>
<dbReference type="InterPro" id="IPR000307">
    <property type="entry name" value="Ribosomal_bS16"/>
</dbReference>
<dbReference type="InterPro" id="IPR020592">
    <property type="entry name" value="Ribosomal_bS16_CS"/>
</dbReference>
<dbReference type="InterPro" id="IPR023803">
    <property type="entry name" value="Ribosomal_bS16_dom_sf"/>
</dbReference>
<dbReference type="NCBIfam" id="TIGR00002">
    <property type="entry name" value="S16"/>
    <property type="match status" value="1"/>
</dbReference>
<dbReference type="PANTHER" id="PTHR12919">
    <property type="entry name" value="30S RIBOSOMAL PROTEIN S16"/>
    <property type="match status" value="1"/>
</dbReference>
<dbReference type="PANTHER" id="PTHR12919:SF20">
    <property type="entry name" value="SMALL RIBOSOMAL SUBUNIT PROTEIN BS16M"/>
    <property type="match status" value="1"/>
</dbReference>
<dbReference type="Pfam" id="PF00886">
    <property type="entry name" value="Ribosomal_S16"/>
    <property type="match status" value="1"/>
</dbReference>
<dbReference type="SUPFAM" id="SSF54565">
    <property type="entry name" value="Ribosomal protein S16"/>
    <property type="match status" value="1"/>
</dbReference>
<dbReference type="PROSITE" id="PS00732">
    <property type="entry name" value="RIBOSOMAL_S16"/>
    <property type="match status" value="1"/>
</dbReference>
<evidence type="ECO:0000255" key="1">
    <source>
        <dbReference type="HAMAP-Rule" id="MF_00385"/>
    </source>
</evidence>
<evidence type="ECO:0000305" key="2"/>
<accession>Q9ZC90</accession>
<comment type="similarity">
    <text evidence="1">Belongs to the bacterial ribosomal protein bS16 family.</text>
</comment>
<feature type="chain" id="PRO_0000167235" description="Small ribosomal subunit protein bS16">
    <location>
        <begin position="1"/>
        <end position="111"/>
    </location>
</feature>